<reference key="1">
    <citation type="journal article" date="2006" name="J. Bacteriol.">
        <title>Chromosome rearrangement and diversification of Francisella tularensis revealed by the type B (OSU18) genome sequence.</title>
        <authorList>
            <person name="Petrosino J.F."/>
            <person name="Xiang Q."/>
            <person name="Karpathy S.E."/>
            <person name="Jiang H."/>
            <person name="Yerrapragada S."/>
            <person name="Liu Y."/>
            <person name="Gioia J."/>
            <person name="Hemphill L."/>
            <person name="Gonzalez A."/>
            <person name="Raghavan T.M."/>
            <person name="Uzman A."/>
            <person name="Fox G.E."/>
            <person name="Highlander S."/>
            <person name="Reichard M."/>
            <person name="Morton R.J."/>
            <person name="Clinkenbeard K.D."/>
            <person name="Weinstock G.M."/>
        </authorList>
    </citation>
    <scope>NUCLEOTIDE SEQUENCE [LARGE SCALE GENOMIC DNA]</scope>
    <source>
        <strain>OSU18</strain>
    </source>
</reference>
<gene>
    <name type="primary">alr</name>
    <name type="ordered locus">FTH_1303</name>
</gene>
<dbReference type="EC" id="5.1.1.1" evidence="1"/>
<dbReference type="EMBL" id="CP000437">
    <property type="protein sequence ID" value="ABI83146.1"/>
    <property type="molecule type" value="Genomic_DNA"/>
</dbReference>
<dbReference type="RefSeq" id="WP_011648728.1">
    <property type="nucleotide sequence ID" value="NC_017463.1"/>
</dbReference>
<dbReference type="SMR" id="Q0BL88"/>
<dbReference type="KEGG" id="fth:FTH_1303"/>
<dbReference type="UniPathway" id="UPA00042">
    <property type="reaction ID" value="UER00497"/>
</dbReference>
<dbReference type="GO" id="GO:0005829">
    <property type="term" value="C:cytosol"/>
    <property type="evidence" value="ECO:0007669"/>
    <property type="project" value="TreeGrafter"/>
</dbReference>
<dbReference type="GO" id="GO:0008784">
    <property type="term" value="F:alanine racemase activity"/>
    <property type="evidence" value="ECO:0007669"/>
    <property type="project" value="UniProtKB-UniRule"/>
</dbReference>
<dbReference type="GO" id="GO:0030170">
    <property type="term" value="F:pyridoxal phosphate binding"/>
    <property type="evidence" value="ECO:0007669"/>
    <property type="project" value="UniProtKB-UniRule"/>
</dbReference>
<dbReference type="GO" id="GO:0030632">
    <property type="term" value="P:D-alanine biosynthetic process"/>
    <property type="evidence" value="ECO:0007669"/>
    <property type="project" value="UniProtKB-UniRule"/>
</dbReference>
<dbReference type="CDD" id="cd00430">
    <property type="entry name" value="PLPDE_III_AR"/>
    <property type="match status" value="1"/>
</dbReference>
<dbReference type="FunFam" id="3.20.20.10:FF:000002">
    <property type="entry name" value="Alanine racemase"/>
    <property type="match status" value="1"/>
</dbReference>
<dbReference type="Gene3D" id="3.20.20.10">
    <property type="entry name" value="Alanine racemase"/>
    <property type="match status" value="1"/>
</dbReference>
<dbReference type="Gene3D" id="2.40.37.10">
    <property type="entry name" value="Lyase, Ornithine Decarboxylase, Chain A, domain 1"/>
    <property type="match status" value="1"/>
</dbReference>
<dbReference type="HAMAP" id="MF_01201">
    <property type="entry name" value="Ala_racemase"/>
    <property type="match status" value="1"/>
</dbReference>
<dbReference type="InterPro" id="IPR000821">
    <property type="entry name" value="Ala_racemase"/>
</dbReference>
<dbReference type="InterPro" id="IPR009006">
    <property type="entry name" value="Ala_racemase/Decarboxylase_C"/>
</dbReference>
<dbReference type="InterPro" id="IPR011079">
    <property type="entry name" value="Ala_racemase_C"/>
</dbReference>
<dbReference type="InterPro" id="IPR001608">
    <property type="entry name" value="Ala_racemase_N"/>
</dbReference>
<dbReference type="InterPro" id="IPR029066">
    <property type="entry name" value="PLP-binding_barrel"/>
</dbReference>
<dbReference type="NCBIfam" id="TIGR00492">
    <property type="entry name" value="alr"/>
    <property type="match status" value="1"/>
</dbReference>
<dbReference type="PANTHER" id="PTHR30511">
    <property type="entry name" value="ALANINE RACEMASE"/>
    <property type="match status" value="1"/>
</dbReference>
<dbReference type="PANTHER" id="PTHR30511:SF0">
    <property type="entry name" value="ALANINE RACEMASE, CATABOLIC-RELATED"/>
    <property type="match status" value="1"/>
</dbReference>
<dbReference type="Pfam" id="PF00842">
    <property type="entry name" value="Ala_racemase_C"/>
    <property type="match status" value="1"/>
</dbReference>
<dbReference type="Pfam" id="PF01168">
    <property type="entry name" value="Ala_racemase_N"/>
    <property type="match status" value="1"/>
</dbReference>
<dbReference type="PRINTS" id="PR00992">
    <property type="entry name" value="ALARACEMASE"/>
</dbReference>
<dbReference type="SMART" id="SM01005">
    <property type="entry name" value="Ala_racemase_C"/>
    <property type="match status" value="1"/>
</dbReference>
<dbReference type="SUPFAM" id="SSF50621">
    <property type="entry name" value="Alanine racemase C-terminal domain-like"/>
    <property type="match status" value="1"/>
</dbReference>
<dbReference type="SUPFAM" id="SSF51419">
    <property type="entry name" value="PLP-binding barrel"/>
    <property type="match status" value="1"/>
</dbReference>
<keyword id="KW-0413">Isomerase</keyword>
<keyword id="KW-0663">Pyridoxal phosphate</keyword>
<protein>
    <recommendedName>
        <fullName evidence="1">Alanine racemase</fullName>
        <ecNumber evidence="1">5.1.1.1</ecNumber>
    </recommendedName>
</protein>
<organism>
    <name type="scientific">Francisella tularensis subsp. holarctica (strain OSU18)</name>
    <dbReference type="NCBI Taxonomy" id="393011"/>
    <lineage>
        <taxon>Bacteria</taxon>
        <taxon>Pseudomonadati</taxon>
        <taxon>Pseudomonadota</taxon>
        <taxon>Gammaproteobacteria</taxon>
        <taxon>Thiotrichales</taxon>
        <taxon>Francisellaceae</taxon>
        <taxon>Francisella</taxon>
    </lineage>
</organism>
<evidence type="ECO:0000255" key="1">
    <source>
        <dbReference type="HAMAP-Rule" id="MF_01201"/>
    </source>
</evidence>
<comment type="function">
    <text evidence="1">Catalyzes the interconversion of L-alanine and D-alanine. May also act on other amino acids.</text>
</comment>
<comment type="catalytic activity">
    <reaction evidence="1">
        <text>L-alanine = D-alanine</text>
        <dbReference type="Rhea" id="RHEA:20249"/>
        <dbReference type="ChEBI" id="CHEBI:57416"/>
        <dbReference type="ChEBI" id="CHEBI:57972"/>
        <dbReference type="EC" id="5.1.1.1"/>
    </reaction>
</comment>
<comment type="cofactor">
    <cofactor evidence="1">
        <name>pyridoxal 5'-phosphate</name>
        <dbReference type="ChEBI" id="CHEBI:597326"/>
    </cofactor>
</comment>
<comment type="pathway">
    <text evidence="1">Amino-acid biosynthesis; D-alanine biosynthesis; D-alanine from L-alanine: step 1/1.</text>
</comment>
<comment type="similarity">
    <text evidence="1">Belongs to the alanine racemase family.</text>
</comment>
<name>ALR_FRATO</name>
<feature type="chain" id="PRO_1000073095" description="Alanine racemase">
    <location>
        <begin position="1"/>
        <end position="365"/>
    </location>
</feature>
<feature type="active site" description="Proton acceptor; specific for D-alanine" evidence="1">
    <location>
        <position position="32"/>
    </location>
</feature>
<feature type="active site" description="Proton acceptor; specific for L-alanine" evidence="1">
    <location>
        <position position="257"/>
    </location>
</feature>
<feature type="binding site" evidence="1">
    <location>
        <position position="128"/>
    </location>
    <ligand>
        <name>substrate</name>
    </ligand>
</feature>
<feature type="binding site" evidence="1">
    <location>
        <position position="305"/>
    </location>
    <ligand>
        <name>substrate</name>
    </ligand>
</feature>
<feature type="modified residue" description="N6-(pyridoxal phosphate)lysine" evidence="1">
    <location>
        <position position="32"/>
    </location>
</feature>
<accession>Q0BL88</accession>
<sequence length="365" mass="41493">MNILKISKQTLRNNIKIIREYIGNAKMCFPVKANAYGHGIEDIVENTHDLVDFFAVANSLEAFRVTAVAKNPVLVFGVIYYEYIEKMISENIRVSIQDYEYIEKLEQIAKELDKKVYAHININTGMNRMGVDYNDACRTIQRAYESDWLILEGVYSHLACADNRDHPTNIKQKNRFDSIVKFTKGLSQDIICHLSNSYGFLGQKGICYDMVRPGILSYGFLPEFYVDRVIREIKPIARLLSKVVKIITLQEGEGVGYSLIYRGFEGEQLAVIPIGYGDGFPRELGDRGFVNINDVMYPMAGRMSMDGLTVSLGINEYDVKVGDTVELISAIPRNRNSAFSIAKQINTIEYDIMSTLNDRIIRKII</sequence>
<proteinExistence type="inferred from homology"/>